<name>RDGC_HAEIG</name>
<accession>A5UGC4</accession>
<keyword id="KW-0963">Cytoplasm</keyword>
<keyword id="KW-0233">DNA recombination</keyword>
<proteinExistence type="inferred from homology"/>
<comment type="function">
    <text evidence="1">May be involved in recombination.</text>
</comment>
<comment type="subcellular location">
    <subcellularLocation>
        <location evidence="1">Cytoplasm</location>
        <location evidence="1">Nucleoid</location>
    </subcellularLocation>
</comment>
<comment type="similarity">
    <text evidence="1">Belongs to the RdgC family.</text>
</comment>
<organism>
    <name type="scientific">Haemophilus influenzae (strain PittGG)</name>
    <dbReference type="NCBI Taxonomy" id="374931"/>
    <lineage>
        <taxon>Bacteria</taxon>
        <taxon>Pseudomonadati</taxon>
        <taxon>Pseudomonadota</taxon>
        <taxon>Gammaproteobacteria</taxon>
        <taxon>Pasteurellales</taxon>
        <taxon>Pasteurellaceae</taxon>
        <taxon>Haemophilus</taxon>
    </lineage>
</organism>
<protein>
    <recommendedName>
        <fullName evidence="1">Recombination-associated protein RdgC</fullName>
    </recommendedName>
</protein>
<sequence>MWFKNLMTYRLTKPLDWDLAQLQTQLEDCQFHPCGTQDQSKFGWSAPLRGSDLLYFSVGKQILLIAKKEEKILPANVVKRELDDRIESLEQKENRKLKKVEKQTLKDDVVMNLLPRAFSKNQHTALWIDTENNLIHIDAASSKRAEDALALLRKSLGSLPVVPLAFANEPSTILTNWILQDNLPHWLLALEEAELRGSQEDSVIRCKKQPLENEEILALLQDGKKVVSKLALEWEDTLTFVFNEDCTIKRLKFADTVREKNDDILKEDFAQRFDADFVLMTGILAKLTENLLDEFGGEKARL</sequence>
<reference key="1">
    <citation type="journal article" date="2007" name="Genome Biol.">
        <title>Characterization and modeling of the Haemophilus influenzae core and supragenomes based on the complete genomic sequences of Rd and 12 clinical nontypeable strains.</title>
        <authorList>
            <person name="Hogg J.S."/>
            <person name="Hu F.Z."/>
            <person name="Janto B."/>
            <person name="Boissy R."/>
            <person name="Hayes J."/>
            <person name="Keefe R."/>
            <person name="Post J.C."/>
            <person name="Ehrlich G.D."/>
        </authorList>
    </citation>
    <scope>NUCLEOTIDE SEQUENCE [LARGE SCALE GENOMIC DNA]</scope>
    <source>
        <strain>PittGG</strain>
    </source>
</reference>
<feature type="chain" id="PRO_1000021208" description="Recombination-associated protein RdgC">
    <location>
        <begin position="1"/>
        <end position="302"/>
    </location>
</feature>
<gene>
    <name evidence="1" type="primary">rdgC</name>
    <name type="ordered locus">CGSHiGG_04345</name>
</gene>
<dbReference type="EMBL" id="CP000672">
    <property type="protein sequence ID" value="ABQ99829.1"/>
    <property type="molecule type" value="Genomic_DNA"/>
</dbReference>
<dbReference type="SMR" id="A5UGC4"/>
<dbReference type="KEGG" id="hiq:CGSHiGG_04345"/>
<dbReference type="HOGENOM" id="CLU_052038_1_1_6"/>
<dbReference type="Proteomes" id="UP000001990">
    <property type="component" value="Chromosome"/>
</dbReference>
<dbReference type="GO" id="GO:0043590">
    <property type="term" value="C:bacterial nucleoid"/>
    <property type="evidence" value="ECO:0007669"/>
    <property type="project" value="TreeGrafter"/>
</dbReference>
<dbReference type="GO" id="GO:0005737">
    <property type="term" value="C:cytoplasm"/>
    <property type="evidence" value="ECO:0007669"/>
    <property type="project" value="UniProtKB-UniRule"/>
</dbReference>
<dbReference type="GO" id="GO:0003690">
    <property type="term" value="F:double-stranded DNA binding"/>
    <property type="evidence" value="ECO:0007669"/>
    <property type="project" value="TreeGrafter"/>
</dbReference>
<dbReference type="GO" id="GO:0006310">
    <property type="term" value="P:DNA recombination"/>
    <property type="evidence" value="ECO:0007669"/>
    <property type="project" value="UniProtKB-UniRule"/>
</dbReference>
<dbReference type="GO" id="GO:0000018">
    <property type="term" value="P:regulation of DNA recombination"/>
    <property type="evidence" value="ECO:0007669"/>
    <property type="project" value="TreeGrafter"/>
</dbReference>
<dbReference type="HAMAP" id="MF_00194">
    <property type="entry name" value="RdgC"/>
    <property type="match status" value="1"/>
</dbReference>
<dbReference type="InterPro" id="IPR007476">
    <property type="entry name" value="RdgC"/>
</dbReference>
<dbReference type="NCBIfam" id="NF001462">
    <property type="entry name" value="PRK00321.1-3"/>
    <property type="match status" value="1"/>
</dbReference>
<dbReference type="NCBIfam" id="NF001464">
    <property type="entry name" value="PRK00321.1-5"/>
    <property type="match status" value="1"/>
</dbReference>
<dbReference type="PANTHER" id="PTHR38103">
    <property type="entry name" value="RECOMBINATION-ASSOCIATED PROTEIN RDGC"/>
    <property type="match status" value="1"/>
</dbReference>
<dbReference type="PANTHER" id="PTHR38103:SF1">
    <property type="entry name" value="RECOMBINATION-ASSOCIATED PROTEIN RDGC"/>
    <property type="match status" value="1"/>
</dbReference>
<dbReference type="Pfam" id="PF04381">
    <property type="entry name" value="RdgC"/>
    <property type="match status" value="1"/>
</dbReference>
<evidence type="ECO:0000255" key="1">
    <source>
        <dbReference type="HAMAP-Rule" id="MF_00194"/>
    </source>
</evidence>